<evidence type="ECO:0000255" key="1">
    <source>
        <dbReference type="HAMAP-Rule" id="MF_00033"/>
    </source>
</evidence>
<organism>
    <name type="scientific">Haemophilus influenzae (strain PittGG)</name>
    <dbReference type="NCBI Taxonomy" id="374931"/>
    <lineage>
        <taxon>Bacteria</taxon>
        <taxon>Pseudomonadati</taxon>
        <taxon>Pseudomonadota</taxon>
        <taxon>Gammaproteobacteria</taxon>
        <taxon>Pasteurellales</taxon>
        <taxon>Pasteurellaceae</taxon>
        <taxon>Haemophilus</taxon>
    </lineage>
</organism>
<accession>A5UIR2</accession>
<proteinExistence type="inferred from homology"/>
<protein>
    <recommendedName>
        <fullName evidence="1">UDP-N-acetylglucosamine--N-acetylmuramyl-(pentapeptide) pyrophosphoryl-undecaprenol N-acetylglucosamine transferase</fullName>
        <ecNumber evidence="1">2.4.1.227</ecNumber>
    </recommendedName>
    <alternativeName>
        <fullName evidence="1">Undecaprenyl-PP-MurNAc-pentapeptide-UDPGlcNAc GlcNAc transferase</fullName>
    </alternativeName>
</protein>
<name>MURG_HAEIG</name>
<sequence>MKNKKLLVMAGGTGGHVFPAIAVAQTLQKQEWDICWLGTKDRMEAQLVPKYGIPIRFIQISGLRGKGIKALLNAPFAIFRAVLQAKKIIQEEKPDAVLGMGGYVSGPAGVAAKLCGVPIILHEQNAIAGLTNKLLGKIATCVLQAFPTAFPHAEVVGNPVREDLFEMPNPDIRFSDREEKLRVLVVGGSQGARVLNHTLPKVVTQLADKLEFRHQVGKGAVEEVSQLYGENLEQVKITEFIDNMAEAYAWADVVICRSGALTVCEIAAVGAAAIFVPFQHKDRQQYLNAKYLSDVGAAKIIEQADLTPEMLVNYLKNLTRENLLQMALKAKTMSMPNAAQRVAEVIKQYSN</sequence>
<feature type="chain" id="PRO_1000002654" description="UDP-N-acetylglucosamine--N-acetylmuramyl-(pentapeptide) pyrophosphoryl-undecaprenol N-acetylglucosamine transferase">
    <location>
        <begin position="1"/>
        <end position="351"/>
    </location>
</feature>
<feature type="binding site" evidence="1">
    <location>
        <begin position="13"/>
        <end position="15"/>
    </location>
    <ligand>
        <name>UDP-N-acetyl-alpha-D-glucosamine</name>
        <dbReference type="ChEBI" id="CHEBI:57705"/>
    </ligand>
</feature>
<feature type="binding site" evidence="1">
    <location>
        <position position="125"/>
    </location>
    <ligand>
        <name>UDP-N-acetyl-alpha-D-glucosamine</name>
        <dbReference type="ChEBI" id="CHEBI:57705"/>
    </ligand>
</feature>
<feature type="binding site" evidence="1">
    <location>
        <position position="161"/>
    </location>
    <ligand>
        <name>UDP-N-acetyl-alpha-D-glucosamine</name>
        <dbReference type="ChEBI" id="CHEBI:57705"/>
    </ligand>
</feature>
<feature type="binding site" evidence="1">
    <location>
        <position position="189"/>
    </location>
    <ligand>
        <name>UDP-N-acetyl-alpha-D-glucosamine</name>
        <dbReference type="ChEBI" id="CHEBI:57705"/>
    </ligand>
</feature>
<feature type="binding site" evidence="1">
    <location>
        <position position="241"/>
    </location>
    <ligand>
        <name>UDP-N-acetyl-alpha-D-glucosamine</name>
        <dbReference type="ChEBI" id="CHEBI:57705"/>
    </ligand>
</feature>
<feature type="binding site" evidence="1">
    <location>
        <begin position="260"/>
        <end position="265"/>
    </location>
    <ligand>
        <name>UDP-N-acetyl-alpha-D-glucosamine</name>
        <dbReference type="ChEBI" id="CHEBI:57705"/>
    </ligand>
</feature>
<feature type="binding site" evidence="1">
    <location>
        <position position="285"/>
    </location>
    <ligand>
        <name>UDP-N-acetyl-alpha-D-glucosamine</name>
        <dbReference type="ChEBI" id="CHEBI:57705"/>
    </ligand>
</feature>
<gene>
    <name evidence="1" type="primary">murG</name>
    <name type="ordered locus">CGSHiGG_09350</name>
</gene>
<comment type="function">
    <text evidence="1">Cell wall formation. Catalyzes the transfer of a GlcNAc subunit on undecaprenyl-pyrophosphoryl-MurNAc-pentapeptide (lipid intermediate I) to form undecaprenyl-pyrophosphoryl-MurNAc-(pentapeptide)GlcNAc (lipid intermediate II).</text>
</comment>
<comment type="catalytic activity">
    <reaction evidence="1">
        <text>di-trans,octa-cis-undecaprenyl diphospho-N-acetyl-alpha-D-muramoyl-L-alanyl-D-glutamyl-meso-2,6-diaminopimeloyl-D-alanyl-D-alanine + UDP-N-acetyl-alpha-D-glucosamine = di-trans,octa-cis-undecaprenyl diphospho-[N-acetyl-alpha-D-glucosaminyl-(1-&gt;4)]-N-acetyl-alpha-D-muramoyl-L-alanyl-D-glutamyl-meso-2,6-diaminopimeloyl-D-alanyl-D-alanine + UDP + H(+)</text>
        <dbReference type="Rhea" id="RHEA:31227"/>
        <dbReference type="ChEBI" id="CHEBI:15378"/>
        <dbReference type="ChEBI" id="CHEBI:57705"/>
        <dbReference type="ChEBI" id="CHEBI:58223"/>
        <dbReference type="ChEBI" id="CHEBI:61387"/>
        <dbReference type="ChEBI" id="CHEBI:61388"/>
        <dbReference type="EC" id="2.4.1.227"/>
    </reaction>
</comment>
<comment type="pathway">
    <text evidence="1">Cell wall biogenesis; peptidoglycan biosynthesis.</text>
</comment>
<comment type="subcellular location">
    <subcellularLocation>
        <location evidence="1">Cell inner membrane</location>
        <topology evidence="1">Peripheral membrane protein</topology>
        <orientation evidence="1">Cytoplasmic side</orientation>
    </subcellularLocation>
</comment>
<comment type="similarity">
    <text evidence="1">Belongs to the glycosyltransferase 28 family. MurG subfamily.</text>
</comment>
<keyword id="KW-0131">Cell cycle</keyword>
<keyword id="KW-0132">Cell division</keyword>
<keyword id="KW-0997">Cell inner membrane</keyword>
<keyword id="KW-1003">Cell membrane</keyword>
<keyword id="KW-0133">Cell shape</keyword>
<keyword id="KW-0961">Cell wall biogenesis/degradation</keyword>
<keyword id="KW-0328">Glycosyltransferase</keyword>
<keyword id="KW-0472">Membrane</keyword>
<keyword id="KW-0573">Peptidoglycan synthesis</keyword>
<keyword id="KW-0808">Transferase</keyword>
<reference key="1">
    <citation type="journal article" date="2007" name="Genome Biol.">
        <title>Characterization and modeling of the Haemophilus influenzae core and supragenomes based on the complete genomic sequences of Rd and 12 clinical nontypeable strains.</title>
        <authorList>
            <person name="Hogg J.S."/>
            <person name="Hu F.Z."/>
            <person name="Janto B."/>
            <person name="Boissy R."/>
            <person name="Hayes J."/>
            <person name="Keefe R."/>
            <person name="Post J.C."/>
            <person name="Ehrlich G.D."/>
        </authorList>
    </citation>
    <scope>NUCLEOTIDE SEQUENCE [LARGE SCALE GENOMIC DNA]</scope>
    <source>
        <strain>PittGG</strain>
    </source>
</reference>
<dbReference type="EC" id="2.4.1.227" evidence="1"/>
<dbReference type="EMBL" id="CP000672">
    <property type="protein sequence ID" value="ABR00668.1"/>
    <property type="molecule type" value="Genomic_DNA"/>
</dbReference>
<dbReference type="SMR" id="A5UIR2"/>
<dbReference type="CAZy" id="GT28">
    <property type="family name" value="Glycosyltransferase Family 28"/>
</dbReference>
<dbReference type="KEGG" id="hiq:CGSHiGG_09350"/>
<dbReference type="HOGENOM" id="CLU_037404_2_0_6"/>
<dbReference type="UniPathway" id="UPA00219"/>
<dbReference type="Proteomes" id="UP000001990">
    <property type="component" value="Chromosome"/>
</dbReference>
<dbReference type="GO" id="GO:0005886">
    <property type="term" value="C:plasma membrane"/>
    <property type="evidence" value="ECO:0007669"/>
    <property type="project" value="UniProtKB-SubCell"/>
</dbReference>
<dbReference type="GO" id="GO:0051991">
    <property type="term" value="F:UDP-N-acetyl-D-glucosamine:N-acetylmuramoyl-L-alanyl-D-glutamyl-meso-2,6-diaminopimelyl-D-alanyl-D-alanine-diphosphoundecaprenol 4-beta-N-acetylglucosaminlytransferase activity"/>
    <property type="evidence" value="ECO:0007669"/>
    <property type="project" value="RHEA"/>
</dbReference>
<dbReference type="GO" id="GO:0050511">
    <property type="term" value="F:undecaprenyldiphospho-muramoylpentapeptide beta-N-acetylglucosaminyltransferase activity"/>
    <property type="evidence" value="ECO:0007669"/>
    <property type="project" value="UniProtKB-UniRule"/>
</dbReference>
<dbReference type="GO" id="GO:0005975">
    <property type="term" value="P:carbohydrate metabolic process"/>
    <property type="evidence" value="ECO:0007669"/>
    <property type="project" value="InterPro"/>
</dbReference>
<dbReference type="GO" id="GO:0051301">
    <property type="term" value="P:cell division"/>
    <property type="evidence" value="ECO:0007669"/>
    <property type="project" value="UniProtKB-KW"/>
</dbReference>
<dbReference type="GO" id="GO:0071555">
    <property type="term" value="P:cell wall organization"/>
    <property type="evidence" value="ECO:0007669"/>
    <property type="project" value="UniProtKB-KW"/>
</dbReference>
<dbReference type="GO" id="GO:0030259">
    <property type="term" value="P:lipid glycosylation"/>
    <property type="evidence" value="ECO:0007669"/>
    <property type="project" value="UniProtKB-UniRule"/>
</dbReference>
<dbReference type="GO" id="GO:0009252">
    <property type="term" value="P:peptidoglycan biosynthetic process"/>
    <property type="evidence" value="ECO:0007669"/>
    <property type="project" value="UniProtKB-UniRule"/>
</dbReference>
<dbReference type="GO" id="GO:0008360">
    <property type="term" value="P:regulation of cell shape"/>
    <property type="evidence" value="ECO:0007669"/>
    <property type="project" value="UniProtKB-KW"/>
</dbReference>
<dbReference type="CDD" id="cd03785">
    <property type="entry name" value="GT28_MurG"/>
    <property type="match status" value="1"/>
</dbReference>
<dbReference type="Gene3D" id="3.40.50.2000">
    <property type="entry name" value="Glycogen Phosphorylase B"/>
    <property type="match status" value="2"/>
</dbReference>
<dbReference type="HAMAP" id="MF_00033">
    <property type="entry name" value="MurG"/>
    <property type="match status" value="1"/>
</dbReference>
<dbReference type="InterPro" id="IPR006009">
    <property type="entry name" value="GlcNAc_MurG"/>
</dbReference>
<dbReference type="InterPro" id="IPR007235">
    <property type="entry name" value="Glyco_trans_28_C"/>
</dbReference>
<dbReference type="InterPro" id="IPR004276">
    <property type="entry name" value="GlycoTrans_28_N"/>
</dbReference>
<dbReference type="NCBIfam" id="TIGR01133">
    <property type="entry name" value="murG"/>
    <property type="match status" value="1"/>
</dbReference>
<dbReference type="PANTHER" id="PTHR21015:SF22">
    <property type="entry name" value="GLYCOSYLTRANSFERASE"/>
    <property type="match status" value="1"/>
</dbReference>
<dbReference type="PANTHER" id="PTHR21015">
    <property type="entry name" value="UDP-N-ACETYLGLUCOSAMINE--N-ACETYLMURAMYL-(PENTAPEPTIDE) PYROPHOSPHORYL-UNDECAPRENOL N-ACETYLGLUCOSAMINE TRANSFERASE 1"/>
    <property type="match status" value="1"/>
</dbReference>
<dbReference type="Pfam" id="PF04101">
    <property type="entry name" value="Glyco_tran_28_C"/>
    <property type="match status" value="1"/>
</dbReference>
<dbReference type="Pfam" id="PF03033">
    <property type="entry name" value="Glyco_transf_28"/>
    <property type="match status" value="1"/>
</dbReference>
<dbReference type="SUPFAM" id="SSF53756">
    <property type="entry name" value="UDP-Glycosyltransferase/glycogen phosphorylase"/>
    <property type="match status" value="1"/>
</dbReference>